<sequence length="360" mass="41176">MRNISDLPNDLLVKILSLIPIKVAASTSLLSKRWGSVWKLIPTLDYDGTYSAAALEFFGKFHTLVALRFMKLTIEDVHSTTCFRSVKNLSLLDVKFSSDKTVERLLSCFPILETLVVHRWGADNVKTFAICVPSLQSLNIRYTVGGYHNPKTDHGFVINAPSLKHLDIVDHFSGFCSLVNMPEQLDAEIHLRHIDSEKLLESLTSSKKLSLCLKPQTGSYPGGDFDQLVCLELCVMCSLDWLNLILRRSPKLRSLKLYQSRERNWSCRNSKHVRTKWEQPNSVPECLLVSLETVKWILYKGTQEEKDVVKYLLKNGNFIKTMSIRFSSVVTLEERIHIPMEFEFMGRINSSRCQLSFSKL</sequence>
<keyword id="KW-0880">Kelch repeat</keyword>
<keyword id="KW-1185">Reference proteome</keyword>
<keyword id="KW-0677">Repeat</keyword>
<name>FBD25_ARATH</name>
<evidence type="ECO:0000255" key="1">
    <source>
        <dbReference type="PROSITE-ProRule" id="PRU00080"/>
    </source>
</evidence>
<dbReference type="EMBL" id="AB009049">
    <property type="protein sequence ID" value="BAB11271.1"/>
    <property type="molecule type" value="Genomic_DNA"/>
</dbReference>
<dbReference type="EMBL" id="CP002688">
    <property type="protein sequence ID" value="AED96764.1"/>
    <property type="molecule type" value="Genomic_DNA"/>
</dbReference>
<dbReference type="RefSeq" id="NP_001318811.1">
    <property type="nucleotide sequence ID" value="NM_001345200.1"/>
</dbReference>
<dbReference type="PaxDb" id="3702-AT5G56430.1"/>
<dbReference type="ProteomicsDB" id="230926"/>
<dbReference type="EnsemblPlants" id="AT5G56430.1">
    <property type="protein sequence ID" value="AT5G56430.1"/>
    <property type="gene ID" value="AT5G56430"/>
</dbReference>
<dbReference type="GeneID" id="835744"/>
<dbReference type="Gramene" id="AT5G56430.1">
    <property type="protein sequence ID" value="AT5G56430.1"/>
    <property type="gene ID" value="AT5G56430"/>
</dbReference>
<dbReference type="KEGG" id="ath:AT5G56430"/>
<dbReference type="Araport" id="AT5G56430"/>
<dbReference type="TAIR" id="AT5G56430"/>
<dbReference type="HOGENOM" id="CLU_010721_1_2_1"/>
<dbReference type="InParanoid" id="Q9FM88"/>
<dbReference type="OMA" id="CIPECLT"/>
<dbReference type="PhylomeDB" id="Q9FM88"/>
<dbReference type="PRO" id="PR:Q9FM88"/>
<dbReference type="Proteomes" id="UP000006548">
    <property type="component" value="Chromosome 5"/>
</dbReference>
<dbReference type="ExpressionAtlas" id="Q9FM88">
    <property type="expression patterns" value="baseline and differential"/>
</dbReference>
<dbReference type="CDD" id="cd22160">
    <property type="entry name" value="F-box_AtFBL13-like"/>
    <property type="match status" value="1"/>
</dbReference>
<dbReference type="Gene3D" id="1.20.1280.50">
    <property type="match status" value="1"/>
</dbReference>
<dbReference type="Gene3D" id="3.80.10.10">
    <property type="entry name" value="Ribonuclease Inhibitor"/>
    <property type="match status" value="1"/>
</dbReference>
<dbReference type="InterPro" id="IPR036047">
    <property type="entry name" value="F-box-like_dom_sf"/>
</dbReference>
<dbReference type="InterPro" id="IPR053781">
    <property type="entry name" value="F-box_AtFBL13-like"/>
</dbReference>
<dbReference type="InterPro" id="IPR001810">
    <property type="entry name" value="F-box_dom"/>
</dbReference>
<dbReference type="InterPro" id="IPR006566">
    <property type="entry name" value="FBD"/>
</dbReference>
<dbReference type="InterPro" id="IPR050232">
    <property type="entry name" value="FBL13/AtMIF1-like"/>
</dbReference>
<dbReference type="InterPro" id="IPR032675">
    <property type="entry name" value="LRR_dom_sf"/>
</dbReference>
<dbReference type="InterPro" id="IPR055411">
    <property type="entry name" value="LRR_FXL15/At3g58940/PEG3-like"/>
</dbReference>
<dbReference type="PANTHER" id="PTHR31900:SF34">
    <property type="entry name" value="EMB|CAB62440.1-RELATED"/>
    <property type="match status" value="1"/>
</dbReference>
<dbReference type="PANTHER" id="PTHR31900">
    <property type="entry name" value="F-BOX/RNI SUPERFAMILY PROTEIN-RELATED"/>
    <property type="match status" value="1"/>
</dbReference>
<dbReference type="Pfam" id="PF00646">
    <property type="entry name" value="F-box"/>
    <property type="match status" value="1"/>
</dbReference>
<dbReference type="Pfam" id="PF08387">
    <property type="entry name" value="FBD"/>
    <property type="match status" value="1"/>
</dbReference>
<dbReference type="Pfam" id="PF24758">
    <property type="entry name" value="LRR_At5g56370"/>
    <property type="match status" value="1"/>
</dbReference>
<dbReference type="SMART" id="SM00579">
    <property type="entry name" value="FBD"/>
    <property type="match status" value="1"/>
</dbReference>
<dbReference type="SUPFAM" id="SSF81383">
    <property type="entry name" value="F-box domain"/>
    <property type="match status" value="1"/>
</dbReference>
<dbReference type="SUPFAM" id="SSF52058">
    <property type="entry name" value="L domain-like"/>
    <property type="match status" value="1"/>
</dbReference>
<dbReference type="PROSITE" id="PS50181">
    <property type="entry name" value="FBOX"/>
    <property type="match status" value="1"/>
</dbReference>
<protein>
    <recommendedName>
        <fullName>Putative FBD-associated F-box protein At5g56430</fullName>
    </recommendedName>
</protein>
<gene>
    <name type="ordered locus">At5g56430</name>
    <name type="ORF">MCD7.19</name>
</gene>
<reference key="1">
    <citation type="journal article" date="1998" name="DNA Res.">
        <title>Structural analysis of Arabidopsis thaliana chromosome 5. IV. Sequence features of the regions of 1,456,315 bp covered by nineteen physically assigned P1 and TAC clones.</title>
        <authorList>
            <person name="Sato S."/>
            <person name="Kaneko T."/>
            <person name="Kotani H."/>
            <person name="Nakamura Y."/>
            <person name="Asamizu E."/>
            <person name="Miyajima N."/>
            <person name="Tabata S."/>
        </authorList>
    </citation>
    <scope>NUCLEOTIDE SEQUENCE [LARGE SCALE GENOMIC DNA]</scope>
    <source>
        <strain>cv. Columbia</strain>
    </source>
</reference>
<reference key="2">
    <citation type="journal article" date="2017" name="Plant J.">
        <title>Araport11: a complete reannotation of the Arabidopsis thaliana reference genome.</title>
        <authorList>
            <person name="Cheng C.Y."/>
            <person name="Krishnakumar V."/>
            <person name="Chan A.P."/>
            <person name="Thibaud-Nissen F."/>
            <person name="Schobel S."/>
            <person name="Town C.D."/>
        </authorList>
    </citation>
    <scope>GENOME REANNOTATION</scope>
    <source>
        <strain>cv. Columbia</strain>
    </source>
</reference>
<feature type="chain" id="PRO_0000283157" description="Putative FBD-associated F-box protein At5g56430">
    <location>
        <begin position="1"/>
        <end position="360"/>
    </location>
</feature>
<feature type="domain" description="F-box" evidence="1">
    <location>
        <begin position="1"/>
        <end position="53"/>
    </location>
</feature>
<feature type="repeat" description="Kelch 1">
    <location>
        <begin position="140"/>
        <end position="186"/>
    </location>
</feature>
<feature type="repeat" description="Kelch 2">
    <location>
        <begin position="235"/>
        <end position="285"/>
    </location>
</feature>
<feature type="domain" description="FBD">
    <location>
        <begin position="276"/>
        <end position="326"/>
    </location>
</feature>
<accession>Q9FM88</accession>
<proteinExistence type="predicted"/>
<organism>
    <name type="scientific">Arabidopsis thaliana</name>
    <name type="common">Mouse-ear cress</name>
    <dbReference type="NCBI Taxonomy" id="3702"/>
    <lineage>
        <taxon>Eukaryota</taxon>
        <taxon>Viridiplantae</taxon>
        <taxon>Streptophyta</taxon>
        <taxon>Embryophyta</taxon>
        <taxon>Tracheophyta</taxon>
        <taxon>Spermatophyta</taxon>
        <taxon>Magnoliopsida</taxon>
        <taxon>eudicotyledons</taxon>
        <taxon>Gunneridae</taxon>
        <taxon>Pentapetalae</taxon>
        <taxon>rosids</taxon>
        <taxon>malvids</taxon>
        <taxon>Brassicales</taxon>
        <taxon>Brassicaceae</taxon>
        <taxon>Camelineae</taxon>
        <taxon>Arabidopsis</taxon>
    </lineage>
</organism>